<protein>
    <recommendedName>
        <fullName evidence="1">Cytochrome b559 subunit beta</fullName>
    </recommendedName>
    <alternativeName>
        <fullName evidence="1">PSII reaction center subunit VI</fullName>
    </alternativeName>
</protein>
<feature type="chain" id="PRO_0000200454" description="Cytochrome b559 subunit beta">
    <location>
        <begin position="1"/>
        <end position="39"/>
    </location>
</feature>
<feature type="transmembrane region" description="Helical" evidence="1">
    <location>
        <begin position="14"/>
        <end position="30"/>
    </location>
</feature>
<feature type="binding site" description="axial binding residue" evidence="1">
    <location>
        <position position="18"/>
    </location>
    <ligand>
        <name>heme</name>
        <dbReference type="ChEBI" id="CHEBI:30413"/>
        <note>ligand shared with alpha subunit</note>
    </ligand>
    <ligandPart>
        <name>Fe</name>
        <dbReference type="ChEBI" id="CHEBI:18248"/>
    </ligandPart>
</feature>
<keyword id="KW-0150">Chloroplast</keyword>
<keyword id="KW-0249">Electron transport</keyword>
<keyword id="KW-0349">Heme</keyword>
<keyword id="KW-0408">Iron</keyword>
<keyword id="KW-0472">Membrane</keyword>
<keyword id="KW-0479">Metal-binding</keyword>
<keyword id="KW-0602">Photosynthesis</keyword>
<keyword id="KW-0604">Photosystem II</keyword>
<keyword id="KW-0934">Plastid</keyword>
<keyword id="KW-0793">Thylakoid</keyword>
<keyword id="KW-0812">Transmembrane</keyword>
<keyword id="KW-1133">Transmembrane helix</keyword>
<keyword id="KW-0813">Transport</keyword>
<sequence>MTIDRTYPIFTVRWLAVHGLAVPTVSFLGSISAMQFIQR</sequence>
<gene>
    <name evidence="1" type="primary">psbF</name>
</gene>
<dbReference type="EMBL" id="AY007487">
    <property type="protein sequence ID" value="AAG27031.1"/>
    <property type="molecule type" value="Genomic_DNA"/>
</dbReference>
<dbReference type="SMR" id="Q7HIT5"/>
<dbReference type="GO" id="GO:0009535">
    <property type="term" value="C:chloroplast thylakoid membrane"/>
    <property type="evidence" value="ECO:0007669"/>
    <property type="project" value="UniProtKB-SubCell"/>
</dbReference>
<dbReference type="GO" id="GO:0009539">
    <property type="term" value="C:photosystem II reaction center"/>
    <property type="evidence" value="ECO:0007669"/>
    <property type="project" value="InterPro"/>
</dbReference>
<dbReference type="GO" id="GO:0009055">
    <property type="term" value="F:electron transfer activity"/>
    <property type="evidence" value="ECO:0007669"/>
    <property type="project" value="UniProtKB-UniRule"/>
</dbReference>
<dbReference type="GO" id="GO:0020037">
    <property type="term" value="F:heme binding"/>
    <property type="evidence" value="ECO:0007669"/>
    <property type="project" value="InterPro"/>
</dbReference>
<dbReference type="GO" id="GO:0005506">
    <property type="term" value="F:iron ion binding"/>
    <property type="evidence" value="ECO:0007669"/>
    <property type="project" value="UniProtKB-UniRule"/>
</dbReference>
<dbReference type="GO" id="GO:0009767">
    <property type="term" value="P:photosynthetic electron transport chain"/>
    <property type="evidence" value="ECO:0007669"/>
    <property type="project" value="InterPro"/>
</dbReference>
<dbReference type="HAMAP" id="MF_00643">
    <property type="entry name" value="PSII_PsbF"/>
    <property type="match status" value="1"/>
</dbReference>
<dbReference type="InterPro" id="IPR006241">
    <property type="entry name" value="PSII_cyt_b559_bsu"/>
</dbReference>
<dbReference type="InterPro" id="IPR006216">
    <property type="entry name" value="PSII_cyt_b559_CS"/>
</dbReference>
<dbReference type="InterPro" id="IPR013081">
    <property type="entry name" value="PSII_cyt_b559_N"/>
</dbReference>
<dbReference type="NCBIfam" id="TIGR01333">
    <property type="entry name" value="cyt_b559_beta"/>
    <property type="match status" value="1"/>
</dbReference>
<dbReference type="Pfam" id="PF00283">
    <property type="entry name" value="Cytochrom_B559"/>
    <property type="match status" value="1"/>
</dbReference>
<dbReference type="PIRSF" id="PIRSF000037">
    <property type="entry name" value="PsbF"/>
    <property type="match status" value="1"/>
</dbReference>
<dbReference type="SUPFAM" id="SSF161045">
    <property type="entry name" value="Cytochrome b559 subunits"/>
    <property type="match status" value="1"/>
</dbReference>
<dbReference type="PROSITE" id="PS00537">
    <property type="entry name" value="CYTOCHROME_B559"/>
    <property type="match status" value="1"/>
</dbReference>
<proteinExistence type="inferred from homology"/>
<reference key="1">
    <citation type="submission" date="2000-02" db="EMBL/GenBank/DDBJ databases">
        <title>Long branches in the seed plants and the root of the angiosperms.</title>
        <authorList>
            <person name="Graham S.W."/>
            <person name="Reeves P.A."/>
            <person name="Burns A."/>
            <person name="Olmstead R.G."/>
        </authorList>
    </citation>
    <scope>NUCLEOTIDE SEQUENCE [GENOMIC DNA]</scope>
</reference>
<organism>
    <name type="scientific">Spathiphyllum wallisii</name>
    <name type="common">Peace lily</name>
    <dbReference type="NCBI Taxonomy" id="85269"/>
    <lineage>
        <taxon>Eukaryota</taxon>
        <taxon>Viridiplantae</taxon>
        <taxon>Streptophyta</taxon>
        <taxon>Embryophyta</taxon>
        <taxon>Tracheophyta</taxon>
        <taxon>Spermatophyta</taxon>
        <taxon>Magnoliopsida</taxon>
        <taxon>Liliopsida</taxon>
        <taxon>Araceae</taxon>
        <taxon>Pothoideae</taxon>
        <taxon>Monstereae</taxon>
        <taxon>Spathiphyllum</taxon>
    </lineage>
</organism>
<geneLocation type="chloroplast"/>
<comment type="function">
    <text evidence="1">This b-type cytochrome is tightly associated with the reaction center of photosystem II (PSII). PSII is a light-driven water:plastoquinone oxidoreductase that uses light energy to abstract electrons from H(2)O, generating O(2) and a proton gradient subsequently used for ATP formation. It consists of a core antenna complex that captures photons, and an electron transfer chain that converts photonic excitation into a charge separation.</text>
</comment>
<comment type="cofactor">
    <cofactor evidence="1">
        <name>heme b</name>
        <dbReference type="ChEBI" id="CHEBI:60344"/>
    </cofactor>
    <text evidence="1">With its partner (PsbE) binds heme. PSII binds additional chlorophylls, carotenoids and specific lipids.</text>
</comment>
<comment type="subunit">
    <text evidence="1">Heterodimer of an alpha subunit and a beta subunit. PSII is composed of 1 copy each of membrane proteins PsbA, PsbB, PsbC, PsbD, PsbE, PsbF, PsbH, PsbI, PsbJ, PsbK, PsbL, PsbM, PsbT, PsbX, PsbY, PsbZ, Psb30/Ycf12, at least 3 peripheral proteins of the oxygen-evolving complex and a large number of cofactors. It forms dimeric complexes.</text>
</comment>
<comment type="subcellular location">
    <subcellularLocation>
        <location evidence="1">Plastid</location>
        <location evidence="1">Chloroplast thylakoid membrane</location>
        <topology evidence="1">Single-pass membrane protein</topology>
    </subcellularLocation>
</comment>
<comment type="similarity">
    <text evidence="1">Belongs to the PsbE/PsbF family.</text>
</comment>
<name>PSBF_SPAWA</name>
<accession>Q7HIT5</accession>
<evidence type="ECO:0000255" key="1">
    <source>
        <dbReference type="HAMAP-Rule" id="MF_00643"/>
    </source>
</evidence>